<organism>
    <name type="scientific">Polaromonas sp. (strain JS666 / ATCC BAA-500)</name>
    <dbReference type="NCBI Taxonomy" id="296591"/>
    <lineage>
        <taxon>Bacteria</taxon>
        <taxon>Pseudomonadati</taxon>
        <taxon>Pseudomonadota</taxon>
        <taxon>Betaproteobacteria</taxon>
        <taxon>Burkholderiales</taxon>
        <taxon>Comamonadaceae</taxon>
        <taxon>Polaromonas</taxon>
    </lineage>
</organism>
<reference key="1">
    <citation type="journal article" date="2008" name="Appl. Environ. Microbiol.">
        <title>The genome of Polaromonas sp. strain JS666: insights into the evolution of a hydrocarbon- and xenobiotic-degrading bacterium, and features of relevance to biotechnology.</title>
        <authorList>
            <person name="Mattes T.E."/>
            <person name="Alexander A.K."/>
            <person name="Richardson P.M."/>
            <person name="Munk A.C."/>
            <person name="Han C.S."/>
            <person name="Stothard P."/>
            <person name="Coleman N.V."/>
        </authorList>
    </citation>
    <scope>NUCLEOTIDE SEQUENCE [LARGE SCALE GENOMIC DNA]</scope>
    <source>
        <strain>JS666 / ATCC BAA-500</strain>
    </source>
</reference>
<accession>Q123B6</accession>
<evidence type="ECO:0000255" key="1">
    <source>
        <dbReference type="HAMAP-Rule" id="MF_00123"/>
    </source>
</evidence>
<protein>
    <recommendedName>
        <fullName evidence="1">Arginine--tRNA ligase</fullName>
        <ecNumber evidence="1">6.1.1.19</ecNumber>
    </recommendedName>
    <alternativeName>
        <fullName evidence="1">Arginyl-tRNA synthetase</fullName>
        <shortName evidence="1">ArgRS</shortName>
    </alternativeName>
</protein>
<comment type="catalytic activity">
    <reaction evidence="1">
        <text>tRNA(Arg) + L-arginine + ATP = L-arginyl-tRNA(Arg) + AMP + diphosphate</text>
        <dbReference type="Rhea" id="RHEA:20301"/>
        <dbReference type="Rhea" id="RHEA-COMP:9658"/>
        <dbReference type="Rhea" id="RHEA-COMP:9673"/>
        <dbReference type="ChEBI" id="CHEBI:30616"/>
        <dbReference type="ChEBI" id="CHEBI:32682"/>
        <dbReference type="ChEBI" id="CHEBI:33019"/>
        <dbReference type="ChEBI" id="CHEBI:78442"/>
        <dbReference type="ChEBI" id="CHEBI:78513"/>
        <dbReference type="ChEBI" id="CHEBI:456215"/>
        <dbReference type="EC" id="6.1.1.19"/>
    </reaction>
</comment>
<comment type="subunit">
    <text evidence="1">Monomer.</text>
</comment>
<comment type="subcellular location">
    <subcellularLocation>
        <location evidence="1">Cytoplasm</location>
    </subcellularLocation>
</comment>
<comment type="similarity">
    <text evidence="1">Belongs to the class-I aminoacyl-tRNA synthetase family.</text>
</comment>
<proteinExistence type="inferred from homology"/>
<gene>
    <name evidence="1" type="primary">argS</name>
    <name type="ordered locus">Bpro_4490</name>
</gene>
<name>SYR_POLSJ</name>
<keyword id="KW-0030">Aminoacyl-tRNA synthetase</keyword>
<keyword id="KW-0067">ATP-binding</keyword>
<keyword id="KW-0963">Cytoplasm</keyword>
<keyword id="KW-0436">Ligase</keyword>
<keyword id="KW-0547">Nucleotide-binding</keyword>
<keyword id="KW-0648">Protein biosynthesis</keyword>
<keyword id="KW-1185">Reference proteome</keyword>
<sequence>MLQIKQDLLDALGQALKTMAPDSGVAAVFESPKVAAHGDFASTAAMQLAKPLKLNPRQVAENLRGLLLQAPAFARWVDAIEIAGPGFLNIRLKPEAKQQVVREVLQGADQYGMQLADSPHRMVVEFVSANPTGPLHVGHGRQAALGDAICNLFDTQGWDVWREFYYNDAGVQIQTLATSTQARAKGLKPGDAGWPEPAYNGDYIADIANDFLAKKTVKSDDREFTASGDVEDIDAIRQFAVAYLRHEQDLDLRAFSVRFDNYYLESSLYSSGRVDSAVQKLKDAGKTYEQDGALWLKSTDYGDDKDRVMKKGDGSYTYFVPDVAYHLAKWERGFSKAINIQGMDHHGTIARVRAGLQAASAGIPQGYPDYVLHTMVRVVRHGEEVKISKRAGSYVTLRDLIEWTSADAVRFFLLSRKPDTEYVFDIDLALAKNNENPVYYVQYAHARICSILGTWAAQGGDASQLKSVDLSALDGPQAQALMLLLAKYPDMLSNAAAGLAPHDVAFYLRELAACYHSYYDAERILVDDEAIKLARLALVAATAQVLHNGLKVLGVSAPHKM</sequence>
<dbReference type="EC" id="6.1.1.19" evidence="1"/>
<dbReference type="EMBL" id="CP000316">
    <property type="protein sequence ID" value="ABE46376.1"/>
    <property type="molecule type" value="Genomic_DNA"/>
</dbReference>
<dbReference type="RefSeq" id="WP_011485364.1">
    <property type="nucleotide sequence ID" value="NC_007948.1"/>
</dbReference>
<dbReference type="SMR" id="Q123B6"/>
<dbReference type="STRING" id="296591.Bpro_4490"/>
<dbReference type="KEGG" id="pol:Bpro_4490"/>
<dbReference type="eggNOG" id="COG0018">
    <property type="taxonomic scope" value="Bacteria"/>
</dbReference>
<dbReference type="HOGENOM" id="CLU_006406_0_1_4"/>
<dbReference type="OrthoDB" id="9803211at2"/>
<dbReference type="Proteomes" id="UP000001983">
    <property type="component" value="Chromosome"/>
</dbReference>
<dbReference type="GO" id="GO:0005737">
    <property type="term" value="C:cytoplasm"/>
    <property type="evidence" value="ECO:0007669"/>
    <property type="project" value="UniProtKB-SubCell"/>
</dbReference>
<dbReference type="GO" id="GO:0004814">
    <property type="term" value="F:arginine-tRNA ligase activity"/>
    <property type="evidence" value="ECO:0007669"/>
    <property type="project" value="UniProtKB-UniRule"/>
</dbReference>
<dbReference type="GO" id="GO:0005524">
    <property type="term" value="F:ATP binding"/>
    <property type="evidence" value="ECO:0007669"/>
    <property type="project" value="UniProtKB-UniRule"/>
</dbReference>
<dbReference type="GO" id="GO:0006420">
    <property type="term" value="P:arginyl-tRNA aminoacylation"/>
    <property type="evidence" value="ECO:0007669"/>
    <property type="project" value="UniProtKB-UniRule"/>
</dbReference>
<dbReference type="CDD" id="cd07956">
    <property type="entry name" value="Anticodon_Ia_Arg"/>
    <property type="match status" value="1"/>
</dbReference>
<dbReference type="CDD" id="cd00671">
    <property type="entry name" value="ArgRS_core"/>
    <property type="match status" value="1"/>
</dbReference>
<dbReference type="FunFam" id="1.10.730.10:FF:000008">
    <property type="entry name" value="Arginine--tRNA ligase"/>
    <property type="match status" value="1"/>
</dbReference>
<dbReference type="FunFam" id="3.40.50.620:FF:000062">
    <property type="entry name" value="Arginine--tRNA ligase"/>
    <property type="match status" value="1"/>
</dbReference>
<dbReference type="Gene3D" id="3.30.1360.70">
    <property type="entry name" value="Arginyl tRNA synthetase N-terminal domain"/>
    <property type="match status" value="1"/>
</dbReference>
<dbReference type="Gene3D" id="3.40.50.620">
    <property type="entry name" value="HUPs"/>
    <property type="match status" value="1"/>
</dbReference>
<dbReference type="Gene3D" id="1.10.730.10">
    <property type="entry name" value="Isoleucyl-tRNA Synthetase, Domain 1"/>
    <property type="match status" value="1"/>
</dbReference>
<dbReference type="HAMAP" id="MF_00123">
    <property type="entry name" value="Arg_tRNA_synth"/>
    <property type="match status" value="1"/>
</dbReference>
<dbReference type="InterPro" id="IPR001412">
    <property type="entry name" value="aa-tRNA-synth_I_CS"/>
</dbReference>
<dbReference type="InterPro" id="IPR001278">
    <property type="entry name" value="Arg-tRNA-ligase"/>
</dbReference>
<dbReference type="InterPro" id="IPR005148">
    <property type="entry name" value="Arg-tRNA-synth_N"/>
</dbReference>
<dbReference type="InterPro" id="IPR036695">
    <property type="entry name" value="Arg-tRNA-synth_N_sf"/>
</dbReference>
<dbReference type="InterPro" id="IPR035684">
    <property type="entry name" value="ArgRS_core"/>
</dbReference>
<dbReference type="InterPro" id="IPR008909">
    <property type="entry name" value="DALR_anticod-bd"/>
</dbReference>
<dbReference type="InterPro" id="IPR014729">
    <property type="entry name" value="Rossmann-like_a/b/a_fold"/>
</dbReference>
<dbReference type="InterPro" id="IPR009080">
    <property type="entry name" value="tRNAsynth_Ia_anticodon-bd"/>
</dbReference>
<dbReference type="NCBIfam" id="TIGR00456">
    <property type="entry name" value="argS"/>
    <property type="match status" value="1"/>
</dbReference>
<dbReference type="PANTHER" id="PTHR11956:SF5">
    <property type="entry name" value="ARGININE--TRNA LIGASE, CYTOPLASMIC"/>
    <property type="match status" value="1"/>
</dbReference>
<dbReference type="PANTHER" id="PTHR11956">
    <property type="entry name" value="ARGINYL-TRNA SYNTHETASE"/>
    <property type="match status" value="1"/>
</dbReference>
<dbReference type="Pfam" id="PF03485">
    <property type="entry name" value="Arg_tRNA_synt_N"/>
    <property type="match status" value="1"/>
</dbReference>
<dbReference type="Pfam" id="PF05746">
    <property type="entry name" value="DALR_1"/>
    <property type="match status" value="1"/>
</dbReference>
<dbReference type="Pfam" id="PF00750">
    <property type="entry name" value="tRNA-synt_1d"/>
    <property type="match status" value="1"/>
</dbReference>
<dbReference type="PRINTS" id="PR01038">
    <property type="entry name" value="TRNASYNTHARG"/>
</dbReference>
<dbReference type="SMART" id="SM01016">
    <property type="entry name" value="Arg_tRNA_synt_N"/>
    <property type="match status" value="1"/>
</dbReference>
<dbReference type="SMART" id="SM00836">
    <property type="entry name" value="DALR_1"/>
    <property type="match status" value="1"/>
</dbReference>
<dbReference type="SUPFAM" id="SSF47323">
    <property type="entry name" value="Anticodon-binding domain of a subclass of class I aminoacyl-tRNA synthetases"/>
    <property type="match status" value="1"/>
</dbReference>
<dbReference type="SUPFAM" id="SSF55190">
    <property type="entry name" value="Arginyl-tRNA synthetase (ArgRS), N-terminal 'additional' domain"/>
    <property type="match status" value="1"/>
</dbReference>
<dbReference type="SUPFAM" id="SSF52374">
    <property type="entry name" value="Nucleotidylyl transferase"/>
    <property type="match status" value="1"/>
</dbReference>
<dbReference type="PROSITE" id="PS00178">
    <property type="entry name" value="AA_TRNA_LIGASE_I"/>
    <property type="match status" value="1"/>
</dbReference>
<feature type="chain" id="PRO_1000018086" description="Arginine--tRNA ligase">
    <location>
        <begin position="1"/>
        <end position="561"/>
    </location>
</feature>
<feature type="short sequence motif" description="'HIGH' region">
    <location>
        <begin position="129"/>
        <end position="139"/>
    </location>
</feature>